<name>FABH_ALLAM</name>
<dbReference type="EC" id="2.3.1.180" evidence="1"/>
<dbReference type="EMBL" id="CP000633">
    <property type="protein sequence ID" value="ACM36167.1"/>
    <property type="molecule type" value="Genomic_DNA"/>
</dbReference>
<dbReference type="RefSeq" id="WP_015915591.1">
    <property type="nucleotide sequence ID" value="NC_011989.1"/>
</dbReference>
<dbReference type="SMR" id="B9JV87"/>
<dbReference type="STRING" id="311402.Avi_1630"/>
<dbReference type="KEGG" id="avi:Avi_1630"/>
<dbReference type="eggNOG" id="COG0332">
    <property type="taxonomic scope" value="Bacteria"/>
</dbReference>
<dbReference type="HOGENOM" id="CLU_039592_3_1_5"/>
<dbReference type="UniPathway" id="UPA00094"/>
<dbReference type="Proteomes" id="UP000001596">
    <property type="component" value="Chromosome 1"/>
</dbReference>
<dbReference type="GO" id="GO:0005737">
    <property type="term" value="C:cytoplasm"/>
    <property type="evidence" value="ECO:0007669"/>
    <property type="project" value="UniProtKB-SubCell"/>
</dbReference>
<dbReference type="GO" id="GO:0004315">
    <property type="term" value="F:3-oxoacyl-[acyl-carrier-protein] synthase activity"/>
    <property type="evidence" value="ECO:0007669"/>
    <property type="project" value="InterPro"/>
</dbReference>
<dbReference type="GO" id="GO:0033818">
    <property type="term" value="F:beta-ketoacyl-acyl-carrier-protein synthase III activity"/>
    <property type="evidence" value="ECO:0007669"/>
    <property type="project" value="UniProtKB-UniRule"/>
</dbReference>
<dbReference type="GO" id="GO:0006633">
    <property type="term" value="P:fatty acid biosynthetic process"/>
    <property type="evidence" value="ECO:0007669"/>
    <property type="project" value="UniProtKB-UniRule"/>
</dbReference>
<dbReference type="CDD" id="cd00830">
    <property type="entry name" value="KAS_III"/>
    <property type="match status" value="1"/>
</dbReference>
<dbReference type="FunFam" id="3.40.47.10:FF:000004">
    <property type="entry name" value="3-oxoacyl-[acyl-carrier-protein] synthase 3"/>
    <property type="match status" value="1"/>
</dbReference>
<dbReference type="Gene3D" id="3.40.47.10">
    <property type="match status" value="1"/>
</dbReference>
<dbReference type="HAMAP" id="MF_01815">
    <property type="entry name" value="FabH"/>
    <property type="match status" value="1"/>
</dbReference>
<dbReference type="InterPro" id="IPR013747">
    <property type="entry name" value="ACP_syn_III_C"/>
</dbReference>
<dbReference type="InterPro" id="IPR013751">
    <property type="entry name" value="ACP_syn_III_N"/>
</dbReference>
<dbReference type="InterPro" id="IPR004655">
    <property type="entry name" value="FabH"/>
</dbReference>
<dbReference type="InterPro" id="IPR016039">
    <property type="entry name" value="Thiolase-like"/>
</dbReference>
<dbReference type="NCBIfam" id="TIGR00747">
    <property type="entry name" value="fabH"/>
    <property type="match status" value="1"/>
</dbReference>
<dbReference type="NCBIfam" id="NF006829">
    <property type="entry name" value="PRK09352.1"/>
    <property type="match status" value="1"/>
</dbReference>
<dbReference type="PANTHER" id="PTHR43091">
    <property type="entry name" value="3-OXOACYL-[ACYL-CARRIER-PROTEIN] SYNTHASE"/>
    <property type="match status" value="1"/>
</dbReference>
<dbReference type="PANTHER" id="PTHR43091:SF1">
    <property type="entry name" value="BETA-KETOACYL-[ACYL-CARRIER-PROTEIN] SYNTHASE III, CHLOROPLASTIC"/>
    <property type="match status" value="1"/>
</dbReference>
<dbReference type="Pfam" id="PF08545">
    <property type="entry name" value="ACP_syn_III"/>
    <property type="match status" value="1"/>
</dbReference>
<dbReference type="Pfam" id="PF08541">
    <property type="entry name" value="ACP_syn_III_C"/>
    <property type="match status" value="1"/>
</dbReference>
<dbReference type="SUPFAM" id="SSF53901">
    <property type="entry name" value="Thiolase-like"/>
    <property type="match status" value="1"/>
</dbReference>
<reference key="1">
    <citation type="journal article" date="2009" name="J. Bacteriol.">
        <title>Genome sequences of three Agrobacterium biovars help elucidate the evolution of multichromosome genomes in bacteria.</title>
        <authorList>
            <person name="Slater S.C."/>
            <person name="Goldman B.S."/>
            <person name="Goodner B."/>
            <person name="Setubal J.C."/>
            <person name="Farrand S.K."/>
            <person name="Nester E.W."/>
            <person name="Burr T.J."/>
            <person name="Banta L."/>
            <person name="Dickerman A.W."/>
            <person name="Paulsen I."/>
            <person name="Otten L."/>
            <person name="Suen G."/>
            <person name="Welch R."/>
            <person name="Almeida N.F."/>
            <person name="Arnold F."/>
            <person name="Burton O.T."/>
            <person name="Du Z."/>
            <person name="Ewing A."/>
            <person name="Godsy E."/>
            <person name="Heisel S."/>
            <person name="Houmiel K.L."/>
            <person name="Jhaveri J."/>
            <person name="Lu J."/>
            <person name="Miller N.M."/>
            <person name="Norton S."/>
            <person name="Chen Q."/>
            <person name="Phoolcharoen W."/>
            <person name="Ohlin V."/>
            <person name="Ondrusek D."/>
            <person name="Pride N."/>
            <person name="Stricklin S.L."/>
            <person name="Sun J."/>
            <person name="Wheeler C."/>
            <person name="Wilson L."/>
            <person name="Zhu H."/>
            <person name="Wood D.W."/>
        </authorList>
    </citation>
    <scope>NUCLEOTIDE SEQUENCE [LARGE SCALE GENOMIC DNA]</scope>
    <source>
        <strain>ATCC BAA-846 / DSM 112012 / S4</strain>
    </source>
</reference>
<protein>
    <recommendedName>
        <fullName evidence="1">Beta-ketoacyl-[acyl-carrier-protein] synthase III</fullName>
        <shortName evidence="1">Beta-ketoacyl-ACP synthase III</shortName>
        <shortName evidence="1">KAS III</shortName>
        <ecNumber evidence="1">2.3.1.180</ecNumber>
    </recommendedName>
    <alternativeName>
        <fullName evidence="1">3-oxoacyl-[acyl-carrier-protein] synthase 3</fullName>
    </alternativeName>
    <alternativeName>
        <fullName evidence="1">3-oxoacyl-[acyl-carrier-protein] synthase III</fullName>
    </alternativeName>
</protein>
<comment type="function">
    <text evidence="1">Catalyzes the condensation reaction of fatty acid synthesis by the addition to an acyl acceptor of two carbons from malonyl-ACP. Catalyzes the first condensation reaction which initiates fatty acid synthesis and may therefore play a role in governing the total rate of fatty acid production. Possesses both acetoacetyl-ACP synthase and acetyl transacylase activities. Its substrate specificity determines the biosynthesis of branched-chain and/or straight-chain of fatty acids.</text>
</comment>
<comment type="catalytic activity">
    <reaction evidence="1">
        <text>malonyl-[ACP] + acetyl-CoA + H(+) = 3-oxobutanoyl-[ACP] + CO2 + CoA</text>
        <dbReference type="Rhea" id="RHEA:12080"/>
        <dbReference type="Rhea" id="RHEA-COMP:9623"/>
        <dbReference type="Rhea" id="RHEA-COMP:9625"/>
        <dbReference type="ChEBI" id="CHEBI:15378"/>
        <dbReference type="ChEBI" id="CHEBI:16526"/>
        <dbReference type="ChEBI" id="CHEBI:57287"/>
        <dbReference type="ChEBI" id="CHEBI:57288"/>
        <dbReference type="ChEBI" id="CHEBI:78449"/>
        <dbReference type="ChEBI" id="CHEBI:78450"/>
        <dbReference type="EC" id="2.3.1.180"/>
    </reaction>
</comment>
<comment type="pathway">
    <text evidence="1">Lipid metabolism; fatty acid biosynthesis.</text>
</comment>
<comment type="subunit">
    <text evidence="1">Homodimer.</text>
</comment>
<comment type="subcellular location">
    <subcellularLocation>
        <location evidence="1">Cytoplasm</location>
    </subcellularLocation>
</comment>
<comment type="domain">
    <text evidence="1">The last Arg residue of the ACP-binding site is essential for the weak association between ACP/AcpP and FabH.</text>
</comment>
<comment type="similarity">
    <text evidence="1">Belongs to the thiolase-like superfamily. FabH family.</text>
</comment>
<feature type="chain" id="PRO_1000187839" description="Beta-ketoacyl-[acyl-carrier-protein] synthase III">
    <location>
        <begin position="1"/>
        <end position="323"/>
    </location>
</feature>
<feature type="region of interest" description="ACP-binding" evidence="1">
    <location>
        <begin position="251"/>
        <end position="255"/>
    </location>
</feature>
<feature type="active site" evidence="1">
    <location>
        <position position="113"/>
    </location>
</feature>
<feature type="active site" evidence="1">
    <location>
        <position position="250"/>
    </location>
</feature>
<feature type="active site" evidence="1">
    <location>
        <position position="280"/>
    </location>
</feature>
<gene>
    <name evidence="1" type="primary">fabH</name>
    <name type="ordered locus">Avi_1630</name>
</gene>
<sequence length="323" mass="34227">MIRSVVRGVGSALPKRLLSNREMETLVDTSDDWIVQRTGIKQRYIAGEGETTASLGAEAALKALEAAGLAPADIDMIICATSTPDNTFPSAAVNIQNRLGMTHGFAFDVQAVCTGFVYAMTTADAYIRGGLAKRVLVIGAETFSRILDWQDRTTCVLFGDGAGALVLEAVEGQGTIADRGVLTAHLRSDGSHKDKLYVDGGPSTTGTVGHLRMEGREVFKHAVGMIADVIEQSFAASGLTAEDVDWLVPHQANRRIIDGAAKKLDIPLEKVVITVDQHGNTSAASIPLAISVAVADGRIKQGDLVLLEAMGGGFTWGALLLRW</sequence>
<organism>
    <name type="scientific">Allorhizobium ampelinum (strain ATCC BAA-846 / DSM 112012 / S4)</name>
    <name type="common">Agrobacterium vitis (strain S4)</name>
    <dbReference type="NCBI Taxonomy" id="311402"/>
    <lineage>
        <taxon>Bacteria</taxon>
        <taxon>Pseudomonadati</taxon>
        <taxon>Pseudomonadota</taxon>
        <taxon>Alphaproteobacteria</taxon>
        <taxon>Hyphomicrobiales</taxon>
        <taxon>Rhizobiaceae</taxon>
        <taxon>Rhizobium/Agrobacterium group</taxon>
        <taxon>Allorhizobium</taxon>
        <taxon>Allorhizobium ampelinum</taxon>
    </lineage>
</organism>
<accession>B9JV87</accession>
<proteinExistence type="inferred from homology"/>
<keyword id="KW-0012">Acyltransferase</keyword>
<keyword id="KW-0963">Cytoplasm</keyword>
<keyword id="KW-0275">Fatty acid biosynthesis</keyword>
<keyword id="KW-0276">Fatty acid metabolism</keyword>
<keyword id="KW-0444">Lipid biosynthesis</keyword>
<keyword id="KW-0443">Lipid metabolism</keyword>
<keyword id="KW-0511">Multifunctional enzyme</keyword>
<keyword id="KW-1185">Reference proteome</keyword>
<keyword id="KW-0808">Transferase</keyword>
<evidence type="ECO:0000255" key="1">
    <source>
        <dbReference type="HAMAP-Rule" id="MF_01815"/>
    </source>
</evidence>